<gene>
    <name type="primary">Csnk2a2</name>
</gene>
<dbReference type="EC" id="2.7.11.1"/>
<dbReference type="EMBL" id="AF012251">
    <property type="protein sequence ID" value="AAC53552.1"/>
    <property type="molecule type" value="mRNA"/>
</dbReference>
<dbReference type="EMBL" id="AJ001420">
    <property type="protein sequence ID" value="CAA04753.1"/>
    <property type="molecule type" value="mRNA"/>
</dbReference>
<dbReference type="EMBL" id="BC057862">
    <property type="protein sequence ID" value="AAH57862.1"/>
    <property type="molecule type" value="mRNA"/>
</dbReference>
<dbReference type="CCDS" id="CCDS22562.1"/>
<dbReference type="RefSeq" id="NP_034104.1">
    <property type="nucleotide sequence ID" value="NM_009974.3"/>
</dbReference>
<dbReference type="SMR" id="O54833"/>
<dbReference type="BioGRID" id="198946">
    <property type="interactions" value="40"/>
</dbReference>
<dbReference type="CORUM" id="O54833"/>
<dbReference type="FunCoup" id="O54833">
    <property type="interactions" value="3764"/>
</dbReference>
<dbReference type="IntAct" id="O54833">
    <property type="interactions" value="7"/>
</dbReference>
<dbReference type="MINT" id="O54833"/>
<dbReference type="STRING" id="10090.ENSMUSP00000148404"/>
<dbReference type="ChEMBL" id="CHEMBL5326"/>
<dbReference type="GlyGen" id="O54833">
    <property type="glycosylation" value="3 sites, 1 N-linked glycan (1 site), 1 O-linked glycan (2 sites)"/>
</dbReference>
<dbReference type="iPTMnet" id="O54833"/>
<dbReference type="PhosphoSitePlus" id="O54833"/>
<dbReference type="jPOST" id="O54833"/>
<dbReference type="PaxDb" id="10090-ENSMUSP00000055919"/>
<dbReference type="PeptideAtlas" id="O54833"/>
<dbReference type="ProteomicsDB" id="284034"/>
<dbReference type="Pumba" id="O54833"/>
<dbReference type="Antibodypedia" id="15225">
    <property type="antibodies" value="328 antibodies from 34 providers"/>
</dbReference>
<dbReference type="DNASU" id="13000"/>
<dbReference type="Ensembl" id="ENSMUST00000056919.9">
    <property type="protein sequence ID" value="ENSMUSP00000055919.8"/>
    <property type="gene ID" value="ENSMUSG00000046707.10"/>
</dbReference>
<dbReference type="Ensembl" id="ENSMUST00000212214.2">
    <property type="protein sequence ID" value="ENSMUSP00000148404.2"/>
    <property type="gene ID" value="ENSMUSG00000046707.10"/>
</dbReference>
<dbReference type="GeneID" id="13000"/>
<dbReference type="KEGG" id="mmu:13000"/>
<dbReference type="UCSC" id="uc009myk.2">
    <property type="organism name" value="mouse"/>
</dbReference>
<dbReference type="AGR" id="MGI:88547"/>
<dbReference type="CTD" id="1459"/>
<dbReference type="MGI" id="MGI:88547">
    <property type="gene designation" value="Csnk2a2"/>
</dbReference>
<dbReference type="VEuPathDB" id="HostDB:ENSMUSG00000046707"/>
<dbReference type="eggNOG" id="KOG0668">
    <property type="taxonomic scope" value="Eukaryota"/>
</dbReference>
<dbReference type="GeneTree" id="ENSGT00390000004215"/>
<dbReference type="HOGENOM" id="CLU_000288_70_4_1"/>
<dbReference type="InParanoid" id="O54833"/>
<dbReference type="OMA" id="ACEKRPQ"/>
<dbReference type="OrthoDB" id="10254671at2759"/>
<dbReference type="PhylomeDB" id="O54833"/>
<dbReference type="TreeFam" id="TF300483"/>
<dbReference type="BRENDA" id="2.7.11.1">
    <property type="organism ID" value="3474"/>
</dbReference>
<dbReference type="Reactome" id="R-MMU-1483191">
    <property type="pathway name" value="Synthesis of PC"/>
</dbReference>
<dbReference type="Reactome" id="R-MMU-201688">
    <property type="pathway name" value="WNT mediated activation of DVL"/>
</dbReference>
<dbReference type="Reactome" id="R-MMU-2514853">
    <property type="pathway name" value="Condensation of Prometaphase Chromosomes"/>
</dbReference>
<dbReference type="Reactome" id="R-MMU-445144">
    <property type="pathway name" value="Signal transduction by L1"/>
</dbReference>
<dbReference type="Reactome" id="R-MMU-6804756">
    <property type="pathway name" value="Regulation of TP53 Activity through Phosphorylation"/>
</dbReference>
<dbReference type="Reactome" id="R-MMU-6814122">
    <property type="pathway name" value="Cooperation of PDCL (PhLP1) and TRiC/CCT in G-protein beta folding"/>
</dbReference>
<dbReference type="Reactome" id="R-MMU-8934903">
    <property type="pathway name" value="Receptor Mediated Mitophagy"/>
</dbReference>
<dbReference type="Reactome" id="R-MMU-8939243">
    <property type="pathway name" value="RUNX1 interacts with co-factors whose precise effect on RUNX1 targets is not known"/>
</dbReference>
<dbReference type="Reactome" id="R-MMU-8948751">
    <property type="pathway name" value="Regulation of PTEN stability and activity"/>
</dbReference>
<dbReference type="BioGRID-ORCS" id="13000">
    <property type="hits" value="6 hits in 80 CRISPR screens"/>
</dbReference>
<dbReference type="CD-CODE" id="CE726F99">
    <property type="entry name" value="Postsynaptic density"/>
</dbReference>
<dbReference type="ChiTaRS" id="Csnk2a2">
    <property type="organism name" value="mouse"/>
</dbReference>
<dbReference type="PRO" id="PR:O54833"/>
<dbReference type="Proteomes" id="UP000000589">
    <property type="component" value="Chromosome 8"/>
</dbReference>
<dbReference type="RNAct" id="O54833">
    <property type="molecule type" value="protein"/>
</dbReference>
<dbReference type="Bgee" id="ENSMUSG00000046707">
    <property type="expression patterns" value="Expressed in rostral migratory stream and 292 other cell types or tissues"/>
</dbReference>
<dbReference type="ExpressionAtlas" id="O54833">
    <property type="expression patterns" value="baseline and differential"/>
</dbReference>
<dbReference type="GO" id="GO:0005829">
    <property type="term" value="C:cytosol"/>
    <property type="evidence" value="ECO:0000304"/>
    <property type="project" value="Reactome"/>
</dbReference>
<dbReference type="GO" id="GO:0031519">
    <property type="term" value="C:PcG protein complex"/>
    <property type="evidence" value="ECO:0007669"/>
    <property type="project" value="Ensembl"/>
</dbReference>
<dbReference type="GO" id="GO:0005956">
    <property type="term" value="C:protein kinase CK2 complex"/>
    <property type="evidence" value="ECO:0000304"/>
    <property type="project" value="MGI"/>
</dbReference>
<dbReference type="GO" id="GO:0005524">
    <property type="term" value="F:ATP binding"/>
    <property type="evidence" value="ECO:0007669"/>
    <property type="project" value="UniProtKB-KW"/>
</dbReference>
<dbReference type="GO" id="GO:0004672">
    <property type="term" value="F:protein kinase activity"/>
    <property type="evidence" value="ECO:0000314"/>
    <property type="project" value="MGI"/>
</dbReference>
<dbReference type="GO" id="GO:0106310">
    <property type="term" value="F:protein serine kinase activity"/>
    <property type="evidence" value="ECO:0007669"/>
    <property type="project" value="RHEA"/>
</dbReference>
<dbReference type="GO" id="GO:0004674">
    <property type="term" value="F:protein serine/threonine kinase activity"/>
    <property type="evidence" value="ECO:0000314"/>
    <property type="project" value="MGI"/>
</dbReference>
<dbReference type="GO" id="GO:0006915">
    <property type="term" value="P:apoptotic process"/>
    <property type="evidence" value="ECO:0007669"/>
    <property type="project" value="UniProtKB-KW"/>
</dbReference>
<dbReference type="GO" id="GO:0006302">
    <property type="term" value="P:double-strand break repair"/>
    <property type="evidence" value="ECO:0000250"/>
    <property type="project" value="UniProtKB"/>
</dbReference>
<dbReference type="GO" id="GO:0032435">
    <property type="term" value="P:negative regulation of proteasomal ubiquitin-dependent protein catabolic process"/>
    <property type="evidence" value="ECO:0007669"/>
    <property type="project" value="Ensembl"/>
</dbReference>
<dbReference type="GO" id="GO:0051726">
    <property type="term" value="P:regulation of cell cycle"/>
    <property type="evidence" value="ECO:0000314"/>
    <property type="project" value="MGI"/>
</dbReference>
<dbReference type="GO" id="GO:1905818">
    <property type="term" value="P:regulation of chromosome separation"/>
    <property type="evidence" value="ECO:0000250"/>
    <property type="project" value="UniProtKB"/>
</dbReference>
<dbReference type="GO" id="GO:0007283">
    <property type="term" value="P:spermatogenesis"/>
    <property type="evidence" value="ECO:0000315"/>
    <property type="project" value="MGI"/>
</dbReference>
<dbReference type="GO" id="GO:0016055">
    <property type="term" value="P:Wnt signaling pathway"/>
    <property type="evidence" value="ECO:0007669"/>
    <property type="project" value="UniProtKB-KW"/>
</dbReference>
<dbReference type="CDD" id="cd14132">
    <property type="entry name" value="STKc_CK2_alpha"/>
    <property type="match status" value="1"/>
</dbReference>
<dbReference type="FunFam" id="1.10.510.10:FF:000059">
    <property type="entry name" value="Casein kinase II subunit alpha"/>
    <property type="match status" value="1"/>
</dbReference>
<dbReference type="FunFam" id="3.30.200.20:FF:000088">
    <property type="entry name" value="Casein kinase II subunit alpha"/>
    <property type="match status" value="1"/>
</dbReference>
<dbReference type="Gene3D" id="3.30.200.20">
    <property type="entry name" value="Phosphorylase Kinase, domain 1"/>
    <property type="match status" value="1"/>
</dbReference>
<dbReference type="Gene3D" id="1.10.510.10">
    <property type="entry name" value="Transferase(Phosphotransferase) domain 1"/>
    <property type="match status" value="1"/>
</dbReference>
<dbReference type="InterPro" id="IPR045216">
    <property type="entry name" value="CK2_alpha"/>
</dbReference>
<dbReference type="InterPro" id="IPR011009">
    <property type="entry name" value="Kinase-like_dom_sf"/>
</dbReference>
<dbReference type="InterPro" id="IPR000719">
    <property type="entry name" value="Prot_kinase_dom"/>
</dbReference>
<dbReference type="InterPro" id="IPR017441">
    <property type="entry name" value="Protein_kinase_ATP_BS"/>
</dbReference>
<dbReference type="InterPro" id="IPR008271">
    <property type="entry name" value="Ser/Thr_kinase_AS"/>
</dbReference>
<dbReference type="PANTHER" id="PTHR24054">
    <property type="entry name" value="CASEIN KINASE II SUBUNIT ALPHA"/>
    <property type="match status" value="1"/>
</dbReference>
<dbReference type="PANTHER" id="PTHR24054:SF34">
    <property type="entry name" value="CASEIN KINASE II SUBUNIT ALPHA"/>
    <property type="match status" value="1"/>
</dbReference>
<dbReference type="Pfam" id="PF00069">
    <property type="entry name" value="Pkinase"/>
    <property type="match status" value="1"/>
</dbReference>
<dbReference type="SMART" id="SM00220">
    <property type="entry name" value="S_TKc"/>
    <property type="match status" value="1"/>
</dbReference>
<dbReference type="SUPFAM" id="SSF56112">
    <property type="entry name" value="Protein kinase-like (PK-like)"/>
    <property type="match status" value="1"/>
</dbReference>
<dbReference type="PROSITE" id="PS00107">
    <property type="entry name" value="PROTEIN_KINASE_ATP"/>
    <property type="match status" value="1"/>
</dbReference>
<dbReference type="PROSITE" id="PS50011">
    <property type="entry name" value="PROTEIN_KINASE_DOM"/>
    <property type="match status" value="1"/>
</dbReference>
<dbReference type="PROSITE" id="PS00108">
    <property type="entry name" value="PROTEIN_KINASE_ST"/>
    <property type="match status" value="1"/>
</dbReference>
<sequence length="350" mass="41215">MPGPAAGSRARVYAEVNSLRSREYWDYEAHVPSWGNQDDYQLVRKLGRGKYSEVFEAINITNNERVVVKILKPVKKKKIKREVKILENLRGGTNIIKLIDTVKDPVSKTPALVFEYINNTDFKQLYQILTDFDIRFYMYELLKALDYCHSKGIMHRDVKPHNVMIDHQQKKLRLIDWGLAEFYHPAQEYNVRVASRYFKGPELLVDYQMYDYSLDMWSLGCMLASMIFRKEPFFHGQDNYDQLVRIAKVLGTDELYGYLKKYHIDLDPHFNDILGQHSRKRWENFIHSENRHLVSPEALDLLDKLLRYDHQQRLTAKEAMEHPYFYPVVKEQSQPCAENTVLSSGLTAAR</sequence>
<keyword id="KW-0007">Acetylation</keyword>
<keyword id="KW-0053">Apoptosis</keyword>
<keyword id="KW-0067">ATP-binding</keyword>
<keyword id="KW-0131">Cell cycle</keyword>
<keyword id="KW-0963">Cytoplasm</keyword>
<keyword id="KW-0418">Kinase</keyword>
<keyword id="KW-0547">Nucleotide-binding</keyword>
<keyword id="KW-0539">Nucleus</keyword>
<keyword id="KW-0597">Phosphoprotein</keyword>
<keyword id="KW-1185">Reference proteome</keyword>
<keyword id="KW-0723">Serine/threonine-protein kinase</keyword>
<keyword id="KW-0804">Transcription</keyword>
<keyword id="KW-0805">Transcription regulation</keyword>
<keyword id="KW-0808">Transferase</keyword>
<keyword id="KW-0879">Wnt signaling pathway</keyword>
<proteinExistence type="evidence at protein level"/>
<feature type="chain" id="PRO_0000085892" description="Casein kinase II subunit alpha'">
    <location>
        <begin position="1"/>
        <end position="350"/>
    </location>
</feature>
<feature type="domain" description="Protein kinase" evidence="2">
    <location>
        <begin position="40"/>
        <end position="325"/>
    </location>
</feature>
<feature type="active site" description="Proton acceptor" evidence="2 3">
    <location>
        <position position="157"/>
    </location>
</feature>
<feature type="binding site" evidence="2">
    <location>
        <begin position="46"/>
        <end position="54"/>
    </location>
    <ligand>
        <name>ATP</name>
        <dbReference type="ChEBI" id="CHEBI:30616"/>
    </ligand>
</feature>
<feature type="binding site" evidence="2">
    <location>
        <position position="69"/>
    </location>
    <ligand>
        <name>ATP</name>
        <dbReference type="ChEBI" id="CHEBI:30616"/>
    </ligand>
</feature>
<feature type="modified residue" description="Phosphotyrosine" evidence="1">
    <location>
        <position position="13"/>
    </location>
</feature>
<feature type="modified residue" description="Phosphoserine" evidence="1">
    <location>
        <position position="18"/>
    </location>
</feature>
<feature type="modified residue" description="Phosphoserine" evidence="1">
    <location>
        <position position="21"/>
    </location>
</feature>
<feature type="modified residue" description="N6-acetyllysine" evidence="1">
    <location>
        <position position="97"/>
    </location>
</feature>
<feature type="modified residue" description="Phosphoserine" evidence="1">
    <location>
        <position position="288"/>
    </location>
</feature>
<name>CSK22_MOUSE</name>
<accession>O54833</accession>
<organism>
    <name type="scientific">Mus musculus</name>
    <name type="common">Mouse</name>
    <dbReference type="NCBI Taxonomy" id="10090"/>
    <lineage>
        <taxon>Eukaryota</taxon>
        <taxon>Metazoa</taxon>
        <taxon>Chordata</taxon>
        <taxon>Craniata</taxon>
        <taxon>Vertebrata</taxon>
        <taxon>Euteleostomi</taxon>
        <taxon>Mammalia</taxon>
        <taxon>Eutheria</taxon>
        <taxon>Euarchontoglires</taxon>
        <taxon>Glires</taxon>
        <taxon>Rodentia</taxon>
        <taxon>Myomorpha</taxon>
        <taxon>Muroidea</taxon>
        <taxon>Muridae</taxon>
        <taxon>Murinae</taxon>
        <taxon>Mus</taxon>
        <taxon>Mus</taxon>
    </lineage>
</organism>
<reference key="1">
    <citation type="journal article" date="1998" name="Genomics">
        <title>Murine protein kinase CK2 alpha': cDNA and genomic cloning and chromosomal mapping.</title>
        <authorList>
            <person name="Xu X."/>
            <person name="Rich E.S. Jr."/>
            <person name="Seldin D.C."/>
        </authorList>
    </citation>
    <scope>NUCLEOTIDE SEQUENCE [MRNA]</scope>
    <source>
        <strain>C57BL/6J</strain>
    </source>
</reference>
<reference key="2">
    <citation type="journal article" date="1998" name="J. Biol. Chem.">
        <title>Protein kinase CK2alpha' is induced by serum as a delayed early gene and cooperates with Ha-ras in fibroblast transformation.</title>
        <authorList>
            <person name="Orlandini M."/>
            <person name="Semplici F."/>
            <person name="Ferruzzi R."/>
            <person name="Meggio F."/>
            <person name="Pinna L.A."/>
            <person name="Oliviero S."/>
        </authorList>
    </citation>
    <scope>NUCLEOTIDE SEQUENCE [MRNA]</scope>
    <source>
        <strain>C57BL/6J</strain>
    </source>
</reference>
<reference key="3">
    <citation type="journal article" date="2004" name="Genome Res.">
        <title>The status, quality, and expansion of the NIH full-length cDNA project: the Mammalian Gene Collection (MGC).</title>
        <authorList>
            <consortium name="The MGC Project Team"/>
        </authorList>
    </citation>
    <scope>NUCLEOTIDE SEQUENCE [LARGE SCALE MRNA]</scope>
    <source>
        <strain>129</strain>
        <tissue>Mammary gland</tissue>
    </source>
</reference>
<reference key="4">
    <citation type="journal article" date="1999" name="Nat. Genet.">
        <title>Globozoospermia in mice lacking the casein kinase II alpha' catalytic subunit.</title>
        <authorList>
            <person name="Xu X."/>
            <person name="Toselli P.A."/>
            <person name="Russell L.D."/>
            <person name="Seldin D.C."/>
        </authorList>
    </citation>
    <scope>DISRUPTION PHENOTYPE</scope>
    <scope>TISSUE SPECIFICITY</scope>
</reference>
<reference key="5">
    <citation type="journal article" date="2009" name="Nucleic Acids Res.">
        <title>Identification and characterization of a novel testis-specific gene CKT2, which encodes a substrate for protein kinase CK2.</title>
        <authorList>
            <person name="Bai X."/>
            <person name="Silvius D."/>
            <person name="Chan E.D."/>
            <person name="Escalier D."/>
            <person name="Xu S.X."/>
        </authorList>
    </citation>
    <scope>INTERACTION WITH CSNK2A2IP</scope>
</reference>
<reference key="6">
    <citation type="journal article" date="2010" name="Cell">
        <title>A tissue-specific atlas of mouse protein phosphorylation and expression.</title>
        <authorList>
            <person name="Huttlin E.L."/>
            <person name="Jedrychowski M.P."/>
            <person name="Elias J.E."/>
            <person name="Goswami T."/>
            <person name="Rad R."/>
            <person name="Beausoleil S.A."/>
            <person name="Villen J."/>
            <person name="Haas W."/>
            <person name="Sowa M.E."/>
            <person name="Gygi S.P."/>
        </authorList>
    </citation>
    <scope>IDENTIFICATION BY MASS SPECTROMETRY [LARGE SCALE ANALYSIS]</scope>
    <source>
        <tissue>Brain</tissue>
        <tissue>Spleen</tissue>
        <tissue>Testis</tissue>
    </source>
</reference>
<reference key="7">
    <citation type="journal article" date="2017" name="Cell Rep.">
        <title>SIRT6 is essential for adipocyte differentiation by regulating mitotic clonal expansion.</title>
        <authorList>
            <person name="Chen Q."/>
            <person name="Hao W."/>
            <person name="Xiao C."/>
            <person name="Wang R."/>
            <person name="Xu X."/>
            <person name="Lu H."/>
            <person name="Chen W."/>
            <person name="Deng C.X."/>
        </authorList>
    </citation>
    <scope>SUBCELLULAR LOCATION</scope>
    <scope>INTERACTION WITH SIRT6</scope>
</reference>
<comment type="function">
    <text evidence="1">Catalytic subunit of a constitutively active serine/threonine-protein kinase complex that phosphorylates a large number of substrates containing acidic residues C-terminal to the phosphorylated serine or threonine. Regulates numerous cellular processes, such as cell cycle progression, apoptosis and transcription, as well as viral infection. May act as a regulatory node which integrates and coordinates numerous signals leading to an appropriate cellular response. During mitosis, functions as a component of the p53/TP53-dependent spindle assembly checkpoint (SAC) that maintains cyclin-B-CDK1 activity and G2 arrest in response to spindle damage. Also required for p53/TP53-mediated apoptosis, phosphorylating 'Ser-392' of p53/TP53 following UV irradiation. Phosphorylates a number of DNA repair proteins in response to DNA damage, such as MDC1, RAD9A, RAD51 and HTATSF1, promoting their recruitment to DNA damage sites. Can also negatively regulate apoptosis. Phosphorylates the caspases CASP9 and CASP2 and the apoptotic regulator NOL3. Phosphorylation protects CASP9 from cleavage and activation by CASP8, and inhibits the dimerization of CASP2 and activation of CASP8. Regulates transcription by direct phosphorylation of RNA polymerases I, II, III and IV. Also phosphorylates and regulates numerous transcription factors including NF-kappa-B, STAT1, CREB1, IRF1, IRF2, ATF1, SRF, MAX, JUN, FOS, MYC and MYB. Phosphorylates Hsp90 and its co-chaperones FKBP4 and CDC37, which is essential for chaperone function. Regulates Wnt signaling by phosphorylating CTNNB1 and the transcription factor LEF1. Acts as an ectokinase that phosphorylates several extracellular proteins. May phosphorylate histone H2A on 'Ser-1'.</text>
</comment>
<comment type="catalytic activity">
    <reaction>
        <text>L-seryl-[protein] + ATP = O-phospho-L-seryl-[protein] + ADP + H(+)</text>
        <dbReference type="Rhea" id="RHEA:17989"/>
        <dbReference type="Rhea" id="RHEA-COMP:9863"/>
        <dbReference type="Rhea" id="RHEA-COMP:11604"/>
        <dbReference type="ChEBI" id="CHEBI:15378"/>
        <dbReference type="ChEBI" id="CHEBI:29999"/>
        <dbReference type="ChEBI" id="CHEBI:30616"/>
        <dbReference type="ChEBI" id="CHEBI:83421"/>
        <dbReference type="ChEBI" id="CHEBI:456216"/>
        <dbReference type="EC" id="2.7.11.1"/>
    </reaction>
</comment>
<comment type="catalytic activity">
    <reaction>
        <text>L-threonyl-[protein] + ATP = O-phospho-L-threonyl-[protein] + ADP + H(+)</text>
        <dbReference type="Rhea" id="RHEA:46608"/>
        <dbReference type="Rhea" id="RHEA-COMP:11060"/>
        <dbReference type="Rhea" id="RHEA-COMP:11605"/>
        <dbReference type="ChEBI" id="CHEBI:15378"/>
        <dbReference type="ChEBI" id="CHEBI:30013"/>
        <dbReference type="ChEBI" id="CHEBI:30616"/>
        <dbReference type="ChEBI" id="CHEBI:61977"/>
        <dbReference type="ChEBI" id="CHEBI:456216"/>
        <dbReference type="EC" id="2.7.11.1"/>
    </reaction>
</comment>
<comment type="activity regulation">
    <text evidence="1">Constitutively active protein kinase whose activity is not directly affected by phosphorylation. Seems to be regulated by level of expression and localization (By similarity).</text>
</comment>
<comment type="subunit">
    <text evidence="1 5 6">Heterotetramer composed of two catalytic subunits (alpha chain and/or alpha' chain) and two regulatory subunits (beta chains). The tetramer can exist as a combination of 2 alpha/2 beta, 2 alpha'/2 beta or 1 alpha/1 alpha'/2 beta subunits. Also part of a CK2-SPT16-SSRP1 complex composed of SSRP1, SUPT16H, CSNK2A1, CSNK2A2 and CSNK2B, which forms following UV irradiation. Interacts with RNPS1 (By similarity). Interacts with CSNK2A2IP (via C-terminus) (PubMed:19273531). Interacts with SIRT6; preventing CSNK2A2 localization to the nucleus (PubMed:28355567). Interacts with HIRIP3 (By similarity).</text>
</comment>
<comment type="subcellular location">
    <subcellularLocation>
        <location evidence="6">Nucleus</location>
    </subcellularLocation>
    <subcellularLocation>
        <location evidence="6">Cytoplasm</location>
    </subcellularLocation>
    <text evidence="6">Interaction with SIRT6 prevents translocation into the nucleus.</text>
</comment>
<comment type="tissue specificity">
    <text evidence="4">Highly expressed in brain, testis and mature epididymal spermatozoa. Weakly expressed in kidney, liver, lung, spleen and thymus (at protein level).</text>
</comment>
<comment type="disruption phenotype">
    <text evidence="4">Infertile male mice with oligospermia and globozoospermia.</text>
</comment>
<comment type="miscellaneous">
    <text>Can use both ATP and GTP as phosphoryl donors. Phosphorylation by casein kinase 2 has been estimated to represent up to one quarter of the eukaryotic phosphoproteome.</text>
</comment>
<comment type="similarity">
    <text evidence="2">Belongs to the protein kinase superfamily. Ser/Thr protein kinase family. CK2 subfamily.</text>
</comment>
<protein>
    <recommendedName>
        <fullName>Casein kinase II subunit alpha'</fullName>
        <shortName>CK II alpha'</shortName>
        <ecNumber>2.7.11.1</ecNumber>
    </recommendedName>
</protein>
<evidence type="ECO:0000250" key="1">
    <source>
        <dbReference type="UniProtKB" id="P19784"/>
    </source>
</evidence>
<evidence type="ECO:0000255" key="2">
    <source>
        <dbReference type="PROSITE-ProRule" id="PRU00159"/>
    </source>
</evidence>
<evidence type="ECO:0000255" key="3">
    <source>
        <dbReference type="PROSITE-ProRule" id="PRU10027"/>
    </source>
</evidence>
<evidence type="ECO:0000269" key="4">
    <source>
    </source>
</evidence>
<evidence type="ECO:0000269" key="5">
    <source>
    </source>
</evidence>
<evidence type="ECO:0000269" key="6">
    <source>
    </source>
</evidence>